<gene>
    <name type="primary">HBE1</name>
    <name type="synonym">HBBE</name>
</gene>
<name>HBE_SMICR</name>
<feature type="chain" id="PRO_0000053230" description="Hemoglobin subunit epsilon">
    <location>
        <begin position="1"/>
        <end position="147"/>
    </location>
</feature>
<feature type="domain" description="Globin" evidence="2">
    <location>
        <begin position="3"/>
        <end position="147"/>
    </location>
</feature>
<feature type="binding site" description="distal binding residue" evidence="2">
    <location>
        <position position="64"/>
    </location>
    <ligand>
        <name>heme b</name>
        <dbReference type="ChEBI" id="CHEBI:60344"/>
    </ligand>
    <ligandPart>
        <name>Fe</name>
        <dbReference type="ChEBI" id="CHEBI:18248"/>
    </ligandPart>
</feature>
<feature type="binding site" description="proximal binding residue" evidence="2">
    <location>
        <position position="93"/>
    </location>
    <ligand>
        <name>heme b</name>
        <dbReference type="ChEBI" id="CHEBI:60344"/>
    </ligand>
    <ligandPart>
        <name>Fe</name>
        <dbReference type="ChEBI" id="CHEBI:18248"/>
    </ligandPart>
</feature>
<feature type="modified residue" description="Phosphoserine" evidence="1">
    <location>
        <position position="51"/>
    </location>
</feature>
<organism>
    <name type="scientific">Sminthopsis crassicaudata</name>
    <name type="common">Fat-tailed dunnart</name>
    <name type="synonym">Phascogale crassicaudata</name>
    <dbReference type="NCBI Taxonomy" id="9301"/>
    <lineage>
        <taxon>Eukaryota</taxon>
        <taxon>Metazoa</taxon>
        <taxon>Chordata</taxon>
        <taxon>Craniata</taxon>
        <taxon>Vertebrata</taxon>
        <taxon>Euteleostomi</taxon>
        <taxon>Mammalia</taxon>
        <taxon>Metatheria</taxon>
        <taxon>Dasyuromorphia</taxon>
        <taxon>Dasyuridae</taxon>
        <taxon>Sminthopsis</taxon>
    </lineage>
</organism>
<protein>
    <recommendedName>
        <fullName>Hemoglobin subunit epsilon</fullName>
    </recommendedName>
    <alternativeName>
        <fullName>Epsilon-globin</fullName>
    </alternativeName>
    <alternativeName>
        <fullName>Hemoglobin embryonic beta chain</fullName>
    </alternativeName>
    <alternativeName>
        <fullName>Hemoglobin epsilon chain</fullName>
    </alternativeName>
</protein>
<dbReference type="EMBL" id="Z48632">
    <property type="protein sequence ID" value="CAA88563.1"/>
    <property type="molecule type" value="Genomic_DNA"/>
</dbReference>
<dbReference type="PIR" id="A49402">
    <property type="entry name" value="A49402"/>
</dbReference>
<dbReference type="SMR" id="Q28931"/>
<dbReference type="GO" id="GO:0072562">
    <property type="term" value="C:blood microparticle"/>
    <property type="evidence" value="ECO:0007669"/>
    <property type="project" value="TreeGrafter"/>
</dbReference>
<dbReference type="GO" id="GO:0031838">
    <property type="term" value="C:haptoglobin-hemoglobin complex"/>
    <property type="evidence" value="ECO:0007669"/>
    <property type="project" value="TreeGrafter"/>
</dbReference>
<dbReference type="GO" id="GO:0005833">
    <property type="term" value="C:hemoglobin complex"/>
    <property type="evidence" value="ECO:0007669"/>
    <property type="project" value="InterPro"/>
</dbReference>
<dbReference type="GO" id="GO:0031720">
    <property type="term" value="F:haptoglobin binding"/>
    <property type="evidence" value="ECO:0007669"/>
    <property type="project" value="TreeGrafter"/>
</dbReference>
<dbReference type="GO" id="GO:0020037">
    <property type="term" value="F:heme binding"/>
    <property type="evidence" value="ECO:0007669"/>
    <property type="project" value="InterPro"/>
</dbReference>
<dbReference type="GO" id="GO:0046872">
    <property type="term" value="F:metal ion binding"/>
    <property type="evidence" value="ECO:0007669"/>
    <property type="project" value="UniProtKB-KW"/>
</dbReference>
<dbReference type="GO" id="GO:0043177">
    <property type="term" value="F:organic acid binding"/>
    <property type="evidence" value="ECO:0007669"/>
    <property type="project" value="TreeGrafter"/>
</dbReference>
<dbReference type="GO" id="GO:0019825">
    <property type="term" value="F:oxygen binding"/>
    <property type="evidence" value="ECO:0007669"/>
    <property type="project" value="InterPro"/>
</dbReference>
<dbReference type="GO" id="GO:0005344">
    <property type="term" value="F:oxygen carrier activity"/>
    <property type="evidence" value="ECO:0007669"/>
    <property type="project" value="UniProtKB-KW"/>
</dbReference>
<dbReference type="GO" id="GO:0004601">
    <property type="term" value="F:peroxidase activity"/>
    <property type="evidence" value="ECO:0007669"/>
    <property type="project" value="TreeGrafter"/>
</dbReference>
<dbReference type="GO" id="GO:0042744">
    <property type="term" value="P:hydrogen peroxide catabolic process"/>
    <property type="evidence" value="ECO:0007669"/>
    <property type="project" value="TreeGrafter"/>
</dbReference>
<dbReference type="CDD" id="cd08925">
    <property type="entry name" value="Hb-beta-like"/>
    <property type="match status" value="1"/>
</dbReference>
<dbReference type="FunFam" id="1.10.490.10:FF:000001">
    <property type="entry name" value="Hemoglobin subunit beta"/>
    <property type="match status" value="1"/>
</dbReference>
<dbReference type="Gene3D" id="1.10.490.10">
    <property type="entry name" value="Globins"/>
    <property type="match status" value="1"/>
</dbReference>
<dbReference type="InterPro" id="IPR000971">
    <property type="entry name" value="Globin"/>
</dbReference>
<dbReference type="InterPro" id="IPR009050">
    <property type="entry name" value="Globin-like_sf"/>
</dbReference>
<dbReference type="InterPro" id="IPR012292">
    <property type="entry name" value="Globin/Proto"/>
</dbReference>
<dbReference type="InterPro" id="IPR002337">
    <property type="entry name" value="Hemoglobin_b"/>
</dbReference>
<dbReference type="InterPro" id="IPR050056">
    <property type="entry name" value="Hemoglobin_oxygen_transport"/>
</dbReference>
<dbReference type="PANTHER" id="PTHR11442">
    <property type="entry name" value="HEMOGLOBIN FAMILY MEMBER"/>
    <property type="match status" value="1"/>
</dbReference>
<dbReference type="PANTHER" id="PTHR11442:SF7">
    <property type="entry name" value="HEMOGLOBIN SUBUNIT EPSILON"/>
    <property type="match status" value="1"/>
</dbReference>
<dbReference type="Pfam" id="PF00042">
    <property type="entry name" value="Globin"/>
    <property type="match status" value="1"/>
</dbReference>
<dbReference type="PRINTS" id="PR00814">
    <property type="entry name" value="BETAHAEM"/>
</dbReference>
<dbReference type="SUPFAM" id="SSF46458">
    <property type="entry name" value="Globin-like"/>
    <property type="match status" value="1"/>
</dbReference>
<dbReference type="PROSITE" id="PS01033">
    <property type="entry name" value="GLOBIN"/>
    <property type="match status" value="1"/>
</dbReference>
<sequence>MVHFTAEEKNAITTIWGKVNVEETGGEALGRLLVVYPWTQRFFDSFGNLSSASAILGNPKVKAHGKKVLTSFGDAVKNLDNLKGTFSKLSELHCDKLHVDPENFRLLGNVLVIVMAAHFNKEFTPEVQAAFQKLVTGVANALAHKYH</sequence>
<keyword id="KW-0349">Heme</keyword>
<keyword id="KW-0408">Iron</keyword>
<keyword id="KW-0479">Metal-binding</keyword>
<keyword id="KW-0561">Oxygen transport</keyword>
<keyword id="KW-0597">Phosphoprotein</keyword>
<keyword id="KW-0813">Transport</keyword>
<reference key="1">
    <citation type="journal article" date="1993" name="Proc. Natl. Acad. Sci. U.S.A.">
        <title>Evolution and expression of a beta-like globin gene of the Australian marsupial Sminthopsis crassicaudata.</title>
        <authorList>
            <person name="Cooper S.J.B."/>
            <person name="Hope R.M."/>
        </authorList>
    </citation>
    <scope>NUCLEOTIDE SEQUENCE [GENOMIC DNA]</scope>
    <source>
        <strain>407.1B</strain>
        <tissue>Liver</tissue>
    </source>
</reference>
<accession>Q28931</accession>
<proteinExistence type="evidence at transcript level"/>
<evidence type="ECO:0000250" key="1">
    <source>
        <dbReference type="UniProtKB" id="P02100"/>
    </source>
</evidence>
<evidence type="ECO:0000255" key="2">
    <source>
        <dbReference type="PROSITE-ProRule" id="PRU00238"/>
    </source>
</evidence>
<comment type="function">
    <text>The epsilon chain is a beta-type chain of early mammalian embryonic hemoglobin.</text>
</comment>
<comment type="subunit">
    <text>Heterotetramer of two alpha chains and two epsilon chains in early embryonic hemoglobin Gower-2; two zeta chains and two epsilon chains in early embryonic hemoglobin Gower-1.</text>
</comment>
<comment type="tissue specificity">
    <text>Red blood cells.</text>
</comment>
<comment type="similarity">
    <text evidence="2">Belongs to the globin family.</text>
</comment>